<protein>
    <recommendedName>
        <fullName evidence="1">Glutamate--tRNA ligase</fullName>
        <ecNumber evidence="1">6.1.1.17</ecNumber>
    </recommendedName>
    <alternativeName>
        <fullName evidence="1">Glutamyl-tRNA synthetase</fullName>
        <shortName evidence="1">GluRS</shortName>
    </alternativeName>
</protein>
<comment type="function">
    <text evidence="1">Catalyzes the attachment of glutamate to tRNA(Glu) in a two-step reaction: glutamate is first activated by ATP to form Glu-AMP and then transferred to the acceptor end of tRNA(Glu).</text>
</comment>
<comment type="catalytic activity">
    <reaction evidence="1">
        <text>tRNA(Glu) + L-glutamate + ATP = L-glutamyl-tRNA(Glu) + AMP + diphosphate</text>
        <dbReference type="Rhea" id="RHEA:23540"/>
        <dbReference type="Rhea" id="RHEA-COMP:9663"/>
        <dbReference type="Rhea" id="RHEA-COMP:9680"/>
        <dbReference type="ChEBI" id="CHEBI:29985"/>
        <dbReference type="ChEBI" id="CHEBI:30616"/>
        <dbReference type="ChEBI" id="CHEBI:33019"/>
        <dbReference type="ChEBI" id="CHEBI:78442"/>
        <dbReference type="ChEBI" id="CHEBI:78520"/>
        <dbReference type="ChEBI" id="CHEBI:456215"/>
        <dbReference type="EC" id="6.1.1.17"/>
    </reaction>
</comment>
<comment type="subunit">
    <text evidence="1">Monomer.</text>
</comment>
<comment type="subcellular location">
    <subcellularLocation>
        <location evidence="1">Cytoplasm</location>
    </subcellularLocation>
</comment>
<comment type="similarity">
    <text evidence="1">Belongs to the class-I aminoacyl-tRNA synthetase family. Glutamate--tRNA ligase type 1 subfamily.</text>
</comment>
<gene>
    <name evidence="1" type="primary">gltX</name>
    <name type="ordered locus">XF_0822</name>
</gene>
<proteinExistence type="inferred from homology"/>
<reference key="1">
    <citation type="journal article" date="2000" name="Nature">
        <title>The genome sequence of the plant pathogen Xylella fastidiosa.</title>
        <authorList>
            <person name="Simpson A.J.G."/>
            <person name="Reinach F.C."/>
            <person name="Arruda P."/>
            <person name="Abreu F.A."/>
            <person name="Acencio M."/>
            <person name="Alvarenga R."/>
            <person name="Alves L.M.C."/>
            <person name="Araya J.E."/>
            <person name="Baia G.S."/>
            <person name="Baptista C.S."/>
            <person name="Barros M.H."/>
            <person name="Bonaccorsi E.D."/>
            <person name="Bordin S."/>
            <person name="Bove J.M."/>
            <person name="Briones M.R.S."/>
            <person name="Bueno M.R.P."/>
            <person name="Camargo A.A."/>
            <person name="Camargo L.E.A."/>
            <person name="Carraro D.M."/>
            <person name="Carrer H."/>
            <person name="Colauto N.B."/>
            <person name="Colombo C."/>
            <person name="Costa F.F."/>
            <person name="Costa M.C.R."/>
            <person name="Costa-Neto C.M."/>
            <person name="Coutinho L.L."/>
            <person name="Cristofani M."/>
            <person name="Dias-Neto E."/>
            <person name="Docena C."/>
            <person name="El-Dorry H."/>
            <person name="Facincani A.P."/>
            <person name="Ferreira A.J.S."/>
            <person name="Ferreira V.C.A."/>
            <person name="Ferro J.A."/>
            <person name="Fraga J.S."/>
            <person name="Franca S.C."/>
            <person name="Franco M.C."/>
            <person name="Frohme M."/>
            <person name="Furlan L.R."/>
            <person name="Garnier M."/>
            <person name="Goldman G.H."/>
            <person name="Goldman M.H.S."/>
            <person name="Gomes S.L."/>
            <person name="Gruber A."/>
            <person name="Ho P.L."/>
            <person name="Hoheisel J.D."/>
            <person name="Junqueira M.L."/>
            <person name="Kemper E.L."/>
            <person name="Kitajima J.P."/>
            <person name="Krieger J.E."/>
            <person name="Kuramae E.E."/>
            <person name="Laigret F."/>
            <person name="Lambais M.R."/>
            <person name="Leite L.C.C."/>
            <person name="Lemos E.G.M."/>
            <person name="Lemos M.V.F."/>
            <person name="Lopes S.A."/>
            <person name="Lopes C.R."/>
            <person name="Machado J.A."/>
            <person name="Machado M.A."/>
            <person name="Madeira A.M.B.N."/>
            <person name="Madeira H.M.F."/>
            <person name="Marino C.L."/>
            <person name="Marques M.V."/>
            <person name="Martins E.A.L."/>
            <person name="Martins E.M.F."/>
            <person name="Matsukuma A.Y."/>
            <person name="Menck C.F.M."/>
            <person name="Miracca E.C."/>
            <person name="Miyaki C.Y."/>
            <person name="Monteiro-Vitorello C.B."/>
            <person name="Moon D.H."/>
            <person name="Nagai M.A."/>
            <person name="Nascimento A.L.T.O."/>
            <person name="Netto L.E.S."/>
            <person name="Nhani A. Jr."/>
            <person name="Nobrega F.G."/>
            <person name="Nunes L.R."/>
            <person name="Oliveira M.A."/>
            <person name="de Oliveira M.C."/>
            <person name="de Oliveira R.C."/>
            <person name="Palmieri D.A."/>
            <person name="Paris A."/>
            <person name="Peixoto B.R."/>
            <person name="Pereira G.A.G."/>
            <person name="Pereira H.A. Jr."/>
            <person name="Pesquero J.B."/>
            <person name="Quaggio R.B."/>
            <person name="Roberto P.G."/>
            <person name="Rodrigues V."/>
            <person name="de Rosa A.J.M."/>
            <person name="de Rosa V.E. Jr."/>
            <person name="de Sa R.G."/>
            <person name="Santelli R.V."/>
            <person name="Sawasaki H.E."/>
            <person name="da Silva A.C.R."/>
            <person name="da Silva A.M."/>
            <person name="da Silva F.R."/>
            <person name="Silva W.A. Jr."/>
            <person name="da Silveira J.F."/>
            <person name="Silvestri M.L.Z."/>
            <person name="Siqueira W.J."/>
            <person name="de Souza A.A."/>
            <person name="de Souza A.P."/>
            <person name="Terenzi M.F."/>
            <person name="Truffi D."/>
            <person name="Tsai S.M."/>
            <person name="Tsuhako M.H."/>
            <person name="Vallada H."/>
            <person name="Van Sluys M.A."/>
            <person name="Verjovski-Almeida S."/>
            <person name="Vettore A.L."/>
            <person name="Zago M.A."/>
            <person name="Zatz M."/>
            <person name="Meidanis J."/>
            <person name="Setubal J.C."/>
        </authorList>
    </citation>
    <scope>NUCLEOTIDE SEQUENCE [LARGE SCALE GENOMIC DNA]</scope>
    <source>
        <strain>9a5c</strain>
    </source>
</reference>
<feature type="chain" id="PRO_0000119706" description="Glutamate--tRNA ligase">
    <location>
        <begin position="1"/>
        <end position="467"/>
    </location>
</feature>
<feature type="short sequence motif" description="'HIGH' region" evidence="1">
    <location>
        <begin position="9"/>
        <end position="19"/>
    </location>
</feature>
<feature type="short sequence motif" description="'KMSKS' region" evidence="1">
    <location>
        <begin position="237"/>
        <end position="241"/>
    </location>
</feature>
<feature type="binding site" evidence="1">
    <location>
        <position position="240"/>
    </location>
    <ligand>
        <name>ATP</name>
        <dbReference type="ChEBI" id="CHEBI:30616"/>
    </ligand>
</feature>
<keyword id="KW-0030">Aminoacyl-tRNA synthetase</keyword>
<keyword id="KW-0067">ATP-binding</keyword>
<keyword id="KW-0963">Cytoplasm</keyword>
<keyword id="KW-0436">Ligase</keyword>
<keyword id="KW-0547">Nucleotide-binding</keyword>
<keyword id="KW-0648">Protein biosynthesis</keyword>
<sequence length="467" mass="52427">MTCRTRFAPSPTGYLHIGGARTALYCWLEARRRNGQFLLRIEDTDRERSTQAAIDAILHAMDWLGLDYDAPPVYQTQRIERYNQVAARLLAEGKAYYAYDSKDTLNAMREAALRTGEKPRYNGAAREANLPYRDDPNRVIRFKNPHTGTVAFDDLIKGRIQIANSELDDMVILRPDGYPTYNFAVVVDDWDMNITEVIRGDDHINNTPRQINLYHALGAPLPTFAHLPMILDEQGAKLSKRTGAADVMQYRDAGYLPHALINYLVRLGWSHGDQELFNRQALIDLFQINDVNSKAARLDMAKLGWVNQHYLKTDDPATLAPPLVWHLEQRGIDVSAGPAPTDVILALRERVQTLKEMAEKAEIWYCPLQRYDEIAVAKHLKPGADTALLHARTLLAALPTWTVDNVDTALRTTATTLEIGMGKVAQPLRVAITGTQVSPDIAYTVYLTGRNEALKRIDAALIKISTA</sequence>
<name>SYE_XYLFA</name>
<accession>Q9PF56</accession>
<evidence type="ECO:0000255" key="1">
    <source>
        <dbReference type="HAMAP-Rule" id="MF_00022"/>
    </source>
</evidence>
<dbReference type="EC" id="6.1.1.17" evidence="1"/>
<dbReference type="EMBL" id="AE003849">
    <property type="protein sequence ID" value="AAF83632.1"/>
    <property type="molecule type" value="Genomic_DNA"/>
</dbReference>
<dbReference type="PIR" id="C82757">
    <property type="entry name" value="C82757"/>
</dbReference>
<dbReference type="RefSeq" id="WP_010893342.1">
    <property type="nucleotide sequence ID" value="NC_002488.3"/>
</dbReference>
<dbReference type="SMR" id="Q9PF56"/>
<dbReference type="STRING" id="160492.XF_0822"/>
<dbReference type="KEGG" id="xfa:XF_0822"/>
<dbReference type="eggNOG" id="COG0008">
    <property type="taxonomic scope" value="Bacteria"/>
</dbReference>
<dbReference type="HOGENOM" id="CLU_015768_6_0_6"/>
<dbReference type="Proteomes" id="UP000000812">
    <property type="component" value="Chromosome"/>
</dbReference>
<dbReference type="GO" id="GO:0005829">
    <property type="term" value="C:cytosol"/>
    <property type="evidence" value="ECO:0007669"/>
    <property type="project" value="TreeGrafter"/>
</dbReference>
<dbReference type="GO" id="GO:0005524">
    <property type="term" value="F:ATP binding"/>
    <property type="evidence" value="ECO:0007669"/>
    <property type="project" value="UniProtKB-UniRule"/>
</dbReference>
<dbReference type="GO" id="GO:0004818">
    <property type="term" value="F:glutamate-tRNA ligase activity"/>
    <property type="evidence" value="ECO:0007669"/>
    <property type="project" value="UniProtKB-UniRule"/>
</dbReference>
<dbReference type="GO" id="GO:0000049">
    <property type="term" value="F:tRNA binding"/>
    <property type="evidence" value="ECO:0007669"/>
    <property type="project" value="InterPro"/>
</dbReference>
<dbReference type="GO" id="GO:0008270">
    <property type="term" value="F:zinc ion binding"/>
    <property type="evidence" value="ECO:0007669"/>
    <property type="project" value="InterPro"/>
</dbReference>
<dbReference type="GO" id="GO:0006424">
    <property type="term" value="P:glutamyl-tRNA aminoacylation"/>
    <property type="evidence" value="ECO:0007669"/>
    <property type="project" value="UniProtKB-UniRule"/>
</dbReference>
<dbReference type="CDD" id="cd00808">
    <property type="entry name" value="GluRS_core"/>
    <property type="match status" value="1"/>
</dbReference>
<dbReference type="FunFam" id="3.40.50.620:FF:000007">
    <property type="entry name" value="Glutamate--tRNA ligase"/>
    <property type="match status" value="1"/>
</dbReference>
<dbReference type="Gene3D" id="1.10.10.350">
    <property type="match status" value="1"/>
</dbReference>
<dbReference type="Gene3D" id="3.40.50.620">
    <property type="entry name" value="HUPs"/>
    <property type="match status" value="1"/>
</dbReference>
<dbReference type="HAMAP" id="MF_00022">
    <property type="entry name" value="Glu_tRNA_synth_type1"/>
    <property type="match status" value="1"/>
</dbReference>
<dbReference type="InterPro" id="IPR045462">
    <property type="entry name" value="aa-tRNA-synth_I_cd-bd"/>
</dbReference>
<dbReference type="InterPro" id="IPR020751">
    <property type="entry name" value="aa-tRNA-synth_I_codon-bd_sub2"/>
</dbReference>
<dbReference type="InterPro" id="IPR001412">
    <property type="entry name" value="aa-tRNA-synth_I_CS"/>
</dbReference>
<dbReference type="InterPro" id="IPR008925">
    <property type="entry name" value="aa_tRNA-synth_I_cd-bd_sf"/>
</dbReference>
<dbReference type="InterPro" id="IPR004527">
    <property type="entry name" value="Glu-tRNA-ligase_bac/mito"/>
</dbReference>
<dbReference type="InterPro" id="IPR000924">
    <property type="entry name" value="Glu/Gln-tRNA-synth"/>
</dbReference>
<dbReference type="InterPro" id="IPR020058">
    <property type="entry name" value="Glu/Gln-tRNA-synth_Ib_cat-dom"/>
</dbReference>
<dbReference type="InterPro" id="IPR049940">
    <property type="entry name" value="GluQ/Sye"/>
</dbReference>
<dbReference type="InterPro" id="IPR033910">
    <property type="entry name" value="GluRS_core"/>
</dbReference>
<dbReference type="InterPro" id="IPR014729">
    <property type="entry name" value="Rossmann-like_a/b/a_fold"/>
</dbReference>
<dbReference type="NCBIfam" id="TIGR00464">
    <property type="entry name" value="gltX_bact"/>
    <property type="match status" value="1"/>
</dbReference>
<dbReference type="PANTHER" id="PTHR43311">
    <property type="entry name" value="GLUTAMATE--TRNA LIGASE"/>
    <property type="match status" value="1"/>
</dbReference>
<dbReference type="PANTHER" id="PTHR43311:SF2">
    <property type="entry name" value="GLUTAMATE--TRNA LIGASE, MITOCHONDRIAL-RELATED"/>
    <property type="match status" value="1"/>
</dbReference>
<dbReference type="Pfam" id="PF19269">
    <property type="entry name" value="Anticodon_2"/>
    <property type="match status" value="1"/>
</dbReference>
<dbReference type="Pfam" id="PF00749">
    <property type="entry name" value="tRNA-synt_1c"/>
    <property type="match status" value="1"/>
</dbReference>
<dbReference type="PRINTS" id="PR00987">
    <property type="entry name" value="TRNASYNTHGLU"/>
</dbReference>
<dbReference type="SUPFAM" id="SSF48163">
    <property type="entry name" value="An anticodon-binding domain of class I aminoacyl-tRNA synthetases"/>
    <property type="match status" value="1"/>
</dbReference>
<dbReference type="SUPFAM" id="SSF52374">
    <property type="entry name" value="Nucleotidylyl transferase"/>
    <property type="match status" value="1"/>
</dbReference>
<dbReference type="PROSITE" id="PS00178">
    <property type="entry name" value="AA_TRNA_LIGASE_I"/>
    <property type="match status" value="1"/>
</dbReference>
<organism>
    <name type="scientific">Xylella fastidiosa (strain 9a5c)</name>
    <dbReference type="NCBI Taxonomy" id="160492"/>
    <lineage>
        <taxon>Bacteria</taxon>
        <taxon>Pseudomonadati</taxon>
        <taxon>Pseudomonadota</taxon>
        <taxon>Gammaproteobacteria</taxon>
        <taxon>Lysobacterales</taxon>
        <taxon>Lysobacteraceae</taxon>
        <taxon>Xylella</taxon>
    </lineage>
</organism>